<comment type="function">
    <text evidence="1">Involved in the efflux of sugars. The physiological role may be the reduction of the intracellular concentration of toxic sugars or sugar metabolites.</text>
</comment>
<comment type="subcellular location">
    <subcellularLocation>
        <location evidence="1">Cell inner membrane</location>
        <topology evidence="1">Multi-pass membrane protein</topology>
    </subcellularLocation>
</comment>
<comment type="similarity">
    <text evidence="1">Belongs to the major facilitator superfamily. SotB (TC 2.A.1.2) family.</text>
</comment>
<protein>
    <recommendedName>
        <fullName evidence="1">Probable sugar efflux transporter</fullName>
    </recommendedName>
</protein>
<reference key="1">
    <citation type="journal article" date="2007" name="J. Bacteriol.">
        <title>The genome sequence of avian pathogenic Escherichia coli strain O1:K1:H7 shares strong similarities with human extraintestinal pathogenic E. coli genomes.</title>
        <authorList>
            <person name="Johnson T.J."/>
            <person name="Kariyawasam S."/>
            <person name="Wannemuehler Y."/>
            <person name="Mangiamele P."/>
            <person name="Johnson S.J."/>
            <person name="Doetkott C."/>
            <person name="Skyberg J.A."/>
            <person name="Lynne A.M."/>
            <person name="Johnson J.R."/>
            <person name="Nolan L.K."/>
        </authorList>
    </citation>
    <scope>NUCLEOTIDE SEQUENCE [LARGE SCALE GENOMIC DNA]</scope>
</reference>
<sequence length="396" mass="42547">MTTNTVSRKVAWLRVVTLAVAAFIFNTTEFVPVGLLSDIAHSFHMQTAQVGIMLTIYAWVVALMSLPFMLMTSQVERRKLLICLFVVFIASHVLSFLSWSFTVLVISRIGVAFAHAIFWSITASLAIRMAPAGKRAQALSLIATGTALAMVLGLPLGRIVGQYFGWRMTFFAIGIGALITLLCLIKLLPLLPSEHSGSLKSLPLLFRRPALMSIYLLTVVVVTAHYTAYSYIEPFVQNIAGFSANFATALLLLLGGAGIIGSVIFGKLGNQYASALVSTAIALLLVCLALLLPAANSEIHLGVLSIFWGIAMMIIGLGMQVKVLALAPDATDVAMALFSGIFNIGIGAGALVGNQVSLHWSMSMIGYVGAVPAFAALIWSIIIFRRWPVTLEEQTQ</sequence>
<proteinExistence type="inferred from homology"/>
<organism>
    <name type="scientific">Escherichia coli O1:K1 / APEC</name>
    <dbReference type="NCBI Taxonomy" id="405955"/>
    <lineage>
        <taxon>Bacteria</taxon>
        <taxon>Pseudomonadati</taxon>
        <taxon>Pseudomonadota</taxon>
        <taxon>Gammaproteobacteria</taxon>
        <taxon>Enterobacterales</taxon>
        <taxon>Enterobacteriaceae</taxon>
        <taxon>Escherichia</taxon>
    </lineage>
</organism>
<dbReference type="EMBL" id="CP000468">
    <property type="protein sequence ID" value="ABJ00947.1"/>
    <property type="molecule type" value="Genomic_DNA"/>
</dbReference>
<dbReference type="SMR" id="A1ABA7"/>
<dbReference type="KEGG" id="ecv:APECO1_646"/>
<dbReference type="HOGENOM" id="CLU_001265_61_1_6"/>
<dbReference type="Proteomes" id="UP000008216">
    <property type="component" value="Chromosome"/>
</dbReference>
<dbReference type="GO" id="GO:0005886">
    <property type="term" value="C:plasma membrane"/>
    <property type="evidence" value="ECO:0007669"/>
    <property type="project" value="UniProtKB-SubCell"/>
</dbReference>
<dbReference type="GO" id="GO:0015144">
    <property type="term" value="F:carbohydrate transmembrane transporter activity"/>
    <property type="evidence" value="ECO:0007669"/>
    <property type="project" value="UniProtKB-UniRule"/>
</dbReference>
<dbReference type="CDD" id="cd17324">
    <property type="entry name" value="MFS_NepI_like"/>
    <property type="match status" value="1"/>
</dbReference>
<dbReference type="FunFam" id="1.20.1250.20:FF:000079">
    <property type="entry name" value="Probable sugar efflux transporter"/>
    <property type="match status" value="1"/>
</dbReference>
<dbReference type="Gene3D" id="1.20.1250.20">
    <property type="entry name" value="MFS general substrate transporter like domains"/>
    <property type="match status" value="1"/>
</dbReference>
<dbReference type="HAMAP" id="MF_00517">
    <property type="entry name" value="MFS_SotB"/>
    <property type="match status" value="1"/>
</dbReference>
<dbReference type="InterPro" id="IPR011701">
    <property type="entry name" value="MFS"/>
</dbReference>
<dbReference type="InterPro" id="IPR020846">
    <property type="entry name" value="MFS_dom"/>
</dbReference>
<dbReference type="InterPro" id="IPR050189">
    <property type="entry name" value="MFS_Efflux_Transporters"/>
</dbReference>
<dbReference type="InterPro" id="IPR036259">
    <property type="entry name" value="MFS_trans_sf"/>
</dbReference>
<dbReference type="InterPro" id="IPR023495">
    <property type="entry name" value="Sugar_effux_transptr_put"/>
</dbReference>
<dbReference type="NCBIfam" id="NF002921">
    <property type="entry name" value="PRK03545.1"/>
    <property type="match status" value="1"/>
</dbReference>
<dbReference type="PANTHER" id="PTHR43124">
    <property type="entry name" value="PURINE EFFLUX PUMP PBUE"/>
    <property type="match status" value="1"/>
</dbReference>
<dbReference type="PANTHER" id="PTHR43124:SF4">
    <property type="entry name" value="SUGAR EFFLUX TRANSPORTER"/>
    <property type="match status" value="1"/>
</dbReference>
<dbReference type="Pfam" id="PF07690">
    <property type="entry name" value="MFS_1"/>
    <property type="match status" value="1"/>
</dbReference>
<dbReference type="SUPFAM" id="SSF103473">
    <property type="entry name" value="MFS general substrate transporter"/>
    <property type="match status" value="1"/>
</dbReference>
<dbReference type="PROSITE" id="PS50850">
    <property type="entry name" value="MFS"/>
    <property type="match status" value="1"/>
</dbReference>
<name>SOTB_ECOK1</name>
<gene>
    <name evidence="1" type="primary">sotB</name>
    <name type="ordered locus">Ecok1_14530</name>
    <name type="ORF">APECO1_646</name>
</gene>
<feature type="chain" id="PRO_1000050797" description="Probable sugar efflux transporter">
    <location>
        <begin position="1"/>
        <end position="396"/>
    </location>
</feature>
<feature type="transmembrane region" description="Helical" evidence="1">
    <location>
        <begin position="15"/>
        <end position="35"/>
    </location>
</feature>
<feature type="transmembrane region" description="Helical" evidence="1">
    <location>
        <begin position="50"/>
        <end position="70"/>
    </location>
</feature>
<feature type="transmembrane region" description="Helical" evidence="1">
    <location>
        <begin position="81"/>
        <end position="101"/>
    </location>
</feature>
<feature type="transmembrane region" description="Helical" evidence="1">
    <location>
        <begin position="103"/>
        <end position="123"/>
    </location>
</feature>
<feature type="transmembrane region" description="Helical" evidence="1">
    <location>
        <begin position="136"/>
        <end position="156"/>
    </location>
</feature>
<feature type="transmembrane region" description="Helical" evidence="1">
    <location>
        <begin position="170"/>
        <end position="190"/>
    </location>
</feature>
<feature type="transmembrane region" description="Helical" evidence="1">
    <location>
        <begin position="209"/>
        <end position="229"/>
    </location>
</feature>
<feature type="transmembrane region" description="Helical" evidence="1">
    <location>
        <begin position="246"/>
        <end position="266"/>
    </location>
</feature>
<feature type="transmembrane region" description="Helical" evidence="1">
    <location>
        <begin position="275"/>
        <end position="295"/>
    </location>
</feature>
<feature type="transmembrane region" description="Helical" evidence="1">
    <location>
        <begin position="299"/>
        <end position="319"/>
    </location>
</feature>
<feature type="transmembrane region" description="Helical" evidence="1">
    <location>
        <begin position="333"/>
        <end position="353"/>
    </location>
</feature>
<feature type="transmembrane region" description="Helical" evidence="1">
    <location>
        <begin position="364"/>
        <end position="384"/>
    </location>
</feature>
<evidence type="ECO:0000255" key="1">
    <source>
        <dbReference type="HAMAP-Rule" id="MF_00517"/>
    </source>
</evidence>
<keyword id="KW-0997">Cell inner membrane</keyword>
<keyword id="KW-1003">Cell membrane</keyword>
<keyword id="KW-0472">Membrane</keyword>
<keyword id="KW-1185">Reference proteome</keyword>
<keyword id="KW-0762">Sugar transport</keyword>
<keyword id="KW-0812">Transmembrane</keyword>
<keyword id="KW-1133">Transmembrane helix</keyword>
<keyword id="KW-0813">Transport</keyword>
<accession>A1ABA7</accession>